<feature type="chain" id="PRO_0000176668" description="Large ribosomal subunit protein bL9">
    <location>
        <begin position="1"/>
        <end position="177"/>
    </location>
</feature>
<protein>
    <recommendedName>
        <fullName evidence="1">Large ribosomal subunit protein bL9</fullName>
    </recommendedName>
    <alternativeName>
        <fullName evidence="2">50S ribosomal protein L9</fullName>
    </alternativeName>
</protein>
<proteinExistence type="inferred from homology"/>
<keyword id="KW-1185">Reference proteome</keyword>
<keyword id="KW-0687">Ribonucleoprotein</keyword>
<keyword id="KW-0689">Ribosomal protein</keyword>
<keyword id="KW-0694">RNA-binding</keyword>
<keyword id="KW-0699">rRNA-binding</keyword>
<comment type="function">
    <text evidence="1">Binds to the 23S rRNA.</text>
</comment>
<comment type="similarity">
    <text evidence="1">Belongs to the bacterial ribosomal protein bL9 family.</text>
</comment>
<accession>Q7UKV4</accession>
<dbReference type="EMBL" id="BX294150">
    <property type="protein sequence ID" value="CAD76528.1"/>
    <property type="molecule type" value="Genomic_DNA"/>
</dbReference>
<dbReference type="RefSeq" id="NP_869142.1">
    <property type="nucleotide sequence ID" value="NC_005027.1"/>
</dbReference>
<dbReference type="RefSeq" id="WP_011122533.1">
    <property type="nucleotide sequence ID" value="NC_005027.1"/>
</dbReference>
<dbReference type="SMR" id="Q7UKV4"/>
<dbReference type="FunCoup" id="Q7UKV4">
    <property type="interactions" value="641"/>
</dbReference>
<dbReference type="STRING" id="243090.RB9916"/>
<dbReference type="EnsemblBacteria" id="CAD76528">
    <property type="protein sequence ID" value="CAD76528"/>
    <property type="gene ID" value="RB9916"/>
</dbReference>
<dbReference type="GeneID" id="90611164"/>
<dbReference type="KEGG" id="rba:RB9916"/>
<dbReference type="PATRIC" id="fig|243090.15.peg.4773"/>
<dbReference type="eggNOG" id="COG0359">
    <property type="taxonomic scope" value="Bacteria"/>
</dbReference>
<dbReference type="HOGENOM" id="CLU_078938_4_0_0"/>
<dbReference type="InParanoid" id="Q7UKV4"/>
<dbReference type="OrthoDB" id="9788336at2"/>
<dbReference type="Proteomes" id="UP000001025">
    <property type="component" value="Chromosome"/>
</dbReference>
<dbReference type="GO" id="GO:0022625">
    <property type="term" value="C:cytosolic large ribosomal subunit"/>
    <property type="evidence" value="ECO:0000318"/>
    <property type="project" value="GO_Central"/>
</dbReference>
<dbReference type="GO" id="GO:0019843">
    <property type="term" value="F:rRNA binding"/>
    <property type="evidence" value="ECO:0007669"/>
    <property type="project" value="UniProtKB-UniRule"/>
</dbReference>
<dbReference type="GO" id="GO:0003735">
    <property type="term" value="F:structural constituent of ribosome"/>
    <property type="evidence" value="ECO:0007669"/>
    <property type="project" value="InterPro"/>
</dbReference>
<dbReference type="GO" id="GO:0006412">
    <property type="term" value="P:translation"/>
    <property type="evidence" value="ECO:0007669"/>
    <property type="project" value="UniProtKB-UniRule"/>
</dbReference>
<dbReference type="FunFam" id="3.10.430.100:FF:000006">
    <property type="entry name" value="50S ribosomal protein L9"/>
    <property type="match status" value="1"/>
</dbReference>
<dbReference type="FunFam" id="3.40.5.10:FF:000003">
    <property type="entry name" value="50S ribosomal protein L9"/>
    <property type="match status" value="1"/>
</dbReference>
<dbReference type="Gene3D" id="3.10.430.100">
    <property type="entry name" value="Ribosomal protein L9, C-terminal domain"/>
    <property type="match status" value="1"/>
</dbReference>
<dbReference type="Gene3D" id="3.40.5.10">
    <property type="entry name" value="Ribosomal protein L9, N-terminal domain"/>
    <property type="match status" value="1"/>
</dbReference>
<dbReference type="HAMAP" id="MF_00503">
    <property type="entry name" value="Ribosomal_bL9"/>
    <property type="match status" value="1"/>
</dbReference>
<dbReference type="InterPro" id="IPR000244">
    <property type="entry name" value="Ribosomal_bL9"/>
</dbReference>
<dbReference type="InterPro" id="IPR009027">
    <property type="entry name" value="Ribosomal_bL9/RNase_H1_N"/>
</dbReference>
<dbReference type="InterPro" id="IPR020594">
    <property type="entry name" value="Ribosomal_bL9_bac/chp"/>
</dbReference>
<dbReference type="InterPro" id="IPR020069">
    <property type="entry name" value="Ribosomal_bL9_C"/>
</dbReference>
<dbReference type="InterPro" id="IPR036791">
    <property type="entry name" value="Ribosomal_bL9_C_sf"/>
</dbReference>
<dbReference type="InterPro" id="IPR020070">
    <property type="entry name" value="Ribosomal_bL9_N"/>
</dbReference>
<dbReference type="InterPro" id="IPR036935">
    <property type="entry name" value="Ribosomal_bL9_N_sf"/>
</dbReference>
<dbReference type="NCBIfam" id="TIGR00158">
    <property type="entry name" value="L9"/>
    <property type="match status" value="1"/>
</dbReference>
<dbReference type="PANTHER" id="PTHR21368">
    <property type="entry name" value="50S RIBOSOMAL PROTEIN L9"/>
    <property type="match status" value="1"/>
</dbReference>
<dbReference type="Pfam" id="PF03948">
    <property type="entry name" value="Ribosomal_L9_C"/>
    <property type="match status" value="1"/>
</dbReference>
<dbReference type="Pfam" id="PF01281">
    <property type="entry name" value="Ribosomal_L9_N"/>
    <property type="match status" value="1"/>
</dbReference>
<dbReference type="SUPFAM" id="SSF55658">
    <property type="entry name" value="L9 N-domain-like"/>
    <property type="match status" value="1"/>
</dbReference>
<dbReference type="SUPFAM" id="SSF55653">
    <property type="entry name" value="Ribosomal protein L9 C-domain"/>
    <property type="match status" value="1"/>
</dbReference>
<dbReference type="PROSITE" id="PS00651">
    <property type="entry name" value="RIBOSOMAL_L9"/>
    <property type="match status" value="1"/>
</dbReference>
<evidence type="ECO:0000255" key="1">
    <source>
        <dbReference type="HAMAP-Rule" id="MF_00503"/>
    </source>
</evidence>
<evidence type="ECO:0000305" key="2"/>
<organism>
    <name type="scientific">Rhodopirellula baltica (strain DSM 10527 / NCIMB 13988 / SH1)</name>
    <dbReference type="NCBI Taxonomy" id="243090"/>
    <lineage>
        <taxon>Bacteria</taxon>
        <taxon>Pseudomonadati</taxon>
        <taxon>Planctomycetota</taxon>
        <taxon>Planctomycetia</taxon>
        <taxon>Pirellulales</taxon>
        <taxon>Pirellulaceae</taxon>
        <taxon>Rhodopirellula</taxon>
    </lineage>
</organism>
<reference key="1">
    <citation type="journal article" date="2003" name="Proc. Natl. Acad. Sci. U.S.A.">
        <title>Complete genome sequence of the marine planctomycete Pirellula sp. strain 1.</title>
        <authorList>
            <person name="Gloeckner F.O."/>
            <person name="Kube M."/>
            <person name="Bauer M."/>
            <person name="Teeling H."/>
            <person name="Lombardot T."/>
            <person name="Ludwig W."/>
            <person name="Gade D."/>
            <person name="Beck A."/>
            <person name="Borzym K."/>
            <person name="Heitmann K."/>
            <person name="Rabus R."/>
            <person name="Schlesner H."/>
            <person name="Amann R."/>
            <person name="Reinhardt R."/>
        </authorList>
    </citation>
    <scope>NUCLEOTIDE SEQUENCE [LARGE SCALE GENOMIC DNA]</scope>
    <source>
        <strain>DSM 10527 / NCIMB 13988 / SH1</strain>
    </source>
</reference>
<name>RL9_RHOBA</name>
<gene>
    <name evidence="1" type="primary">rplI</name>
    <name type="ordered locus">RB9916</name>
</gene>
<sequence>MSKSATSHFKRLPKGQNGGIELLLIHNVEHLGRQGDLVEVKAGYALNYLLPQGLATIATDHHKRMVEKHREKLRAIELEKLKSYREQADELAKQSITIEANANDEGHLYGSVGPHEIVDALKASGITLAQDQIRLEGPLKELGLYTVKIHLHSEVDASLKVWVVPTVAAEGGEPGAS</sequence>